<dbReference type="EMBL" id="X69084">
    <property type="protein sequence ID" value="CAA48828.1"/>
    <property type="molecule type" value="mRNA"/>
</dbReference>
<dbReference type="EMBL" id="AY911322">
    <property type="protein sequence ID" value="AAW82090.1"/>
    <property type="molecule type" value="mRNA"/>
</dbReference>
<dbReference type="EMBL" id="BC118352">
    <property type="protein sequence ID" value="AAI18353.1"/>
    <property type="molecule type" value="mRNA"/>
</dbReference>
<dbReference type="PIR" id="I46000">
    <property type="entry name" value="MGBOB2"/>
</dbReference>
<dbReference type="RefSeq" id="NP_776318.1">
    <property type="nucleotide sequence ID" value="NM_173893.3"/>
</dbReference>
<dbReference type="RefSeq" id="XP_001251108.1">
    <property type="nucleotide sequence ID" value="XM_001251107.5"/>
</dbReference>
<dbReference type="PDB" id="1BMG">
    <property type="method" value="X-ray"/>
    <property type="resolution" value="2.50 A"/>
    <property type="chains" value="A=21-118"/>
</dbReference>
<dbReference type="PDB" id="2XFX">
    <property type="method" value="X-ray"/>
    <property type="resolution" value="1.90 A"/>
    <property type="chains" value="B=20-118"/>
</dbReference>
<dbReference type="PDB" id="3L9R">
    <property type="method" value="X-ray"/>
    <property type="resolution" value="2.30 A"/>
    <property type="chains" value="B/D/F/H=21-118"/>
</dbReference>
<dbReference type="PDB" id="3PWV">
    <property type="method" value="X-ray"/>
    <property type="resolution" value="2.70 A"/>
    <property type="chains" value="B/E=21-118"/>
</dbReference>
<dbReference type="PDB" id="4F7C">
    <property type="method" value="X-ray"/>
    <property type="resolution" value="2.86 A"/>
    <property type="chains" value="B/D=21-118"/>
</dbReference>
<dbReference type="PDB" id="4F7E">
    <property type="method" value="X-ray"/>
    <property type="resolution" value="2.40 A"/>
    <property type="chains" value="B=21-118"/>
</dbReference>
<dbReference type="PDB" id="4IIQ">
    <property type="method" value="X-ray"/>
    <property type="resolution" value="2.86 A"/>
    <property type="chains" value="C=21-118"/>
</dbReference>
<dbReference type="PDB" id="4L8S">
    <property type="method" value="X-ray"/>
    <property type="resolution" value="2.90 A"/>
    <property type="chains" value="C=21-118"/>
</dbReference>
<dbReference type="PDB" id="4L9L">
    <property type="method" value="X-ray"/>
    <property type="resolution" value="3.40 A"/>
    <property type="chains" value="C=21-118"/>
</dbReference>
<dbReference type="PDB" id="4LCC">
    <property type="method" value="X-ray"/>
    <property type="resolution" value="3.26 A"/>
    <property type="chains" value="C=21-118"/>
</dbReference>
<dbReference type="PDB" id="7RNO">
    <property type="method" value="NMR"/>
    <property type="chains" value="B=21-118"/>
</dbReference>
<dbReference type="PDBsum" id="1BMG"/>
<dbReference type="PDBsum" id="2XFX"/>
<dbReference type="PDBsum" id="3L9R"/>
<dbReference type="PDBsum" id="3PWV"/>
<dbReference type="PDBsum" id="4F7C"/>
<dbReference type="PDBsum" id="4F7E"/>
<dbReference type="PDBsum" id="4IIQ"/>
<dbReference type="PDBsum" id="4L8S"/>
<dbReference type="PDBsum" id="4L9L"/>
<dbReference type="PDBsum" id="4LCC"/>
<dbReference type="PDBsum" id="7RNO"/>
<dbReference type="SMR" id="P01888"/>
<dbReference type="FunCoup" id="P01888">
    <property type="interactions" value="916"/>
</dbReference>
<dbReference type="STRING" id="9913.ENSBTAP00000016359"/>
<dbReference type="CarbonylDB" id="P01888"/>
<dbReference type="PaxDb" id="9913-ENSBTAP00000016359"/>
<dbReference type="PeptideAtlas" id="P01888"/>
<dbReference type="Ensembl" id="ENSBTAT00000016359.4">
    <property type="protein sequence ID" value="ENSBTAP00000016359.2"/>
    <property type="gene ID" value="ENSBTAG00000012330.7"/>
</dbReference>
<dbReference type="Ensembl" id="ENSBTAT00000086688.2">
    <property type="protein sequence ID" value="ENSBTAP00000058374.2"/>
    <property type="gene ID" value="ENSBTAG00000048782.2"/>
</dbReference>
<dbReference type="GeneID" id="280729"/>
<dbReference type="KEGG" id="bta:280729"/>
<dbReference type="KEGG" id="bta:783680"/>
<dbReference type="CTD" id="567"/>
<dbReference type="VEuPathDB" id="HostDB:ENSBTAG00000012330"/>
<dbReference type="eggNOG" id="ENOG502S8GM">
    <property type="taxonomic scope" value="Eukaryota"/>
</dbReference>
<dbReference type="GeneTree" id="ENSGT00690000102227"/>
<dbReference type="HOGENOM" id="CLU_163066_0_0_1"/>
<dbReference type="InParanoid" id="P01888"/>
<dbReference type="OMA" id="EDVFSCR"/>
<dbReference type="OrthoDB" id="9949628at2759"/>
<dbReference type="TreeFam" id="TF334167"/>
<dbReference type="Reactome" id="R-BTA-1236974">
    <property type="pathway name" value="ER-Phagosome pathway"/>
</dbReference>
<dbReference type="Reactome" id="R-BTA-1236977">
    <property type="pathway name" value="Endosomal/Vacuolar pathway"/>
</dbReference>
<dbReference type="Reactome" id="R-BTA-198933">
    <property type="pathway name" value="Immunoregulatory interactions between a Lymphoid and a non-Lymphoid cell"/>
</dbReference>
<dbReference type="Reactome" id="R-BTA-2424491">
    <property type="pathway name" value="DAP12 signaling"/>
</dbReference>
<dbReference type="Reactome" id="R-BTA-6798695">
    <property type="pathway name" value="Neutrophil degranulation"/>
</dbReference>
<dbReference type="Reactome" id="R-BTA-983170">
    <property type="pathway name" value="Antigen Presentation: Folding, assembly and peptide loading of class I MHC"/>
</dbReference>
<dbReference type="EvolutionaryTrace" id="P01888"/>
<dbReference type="Proteomes" id="UP000009136">
    <property type="component" value="Chromosome 10"/>
</dbReference>
<dbReference type="Bgee" id="ENSBTAG00000012330">
    <property type="expression patterns" value="Expressed in monocyte and 106 other cell types or tissues"/>
</dbReference>
<dbReference type="GO" id="GO:0005576">
    <property type="term" value="C:extracellular region"/>
    <property type="evidence" value="ECO:0007669"/>
    <property type="project" value="UniProtKB-SubCell"/>
</dbReference>
<dbReference type="GO" id="GO:0031902">
    <property type="term" value="C:late endosome membrane"/>
    <property type="evidence" value="ECO:0000318"/>
    <property type="project" value="GO_Central"/>
</dbReference>
<dbReference type="GO" id="GO:0005765">
    <property type="term" value="C:lysosomal membrane"/>
    <property type="evidence" value="ECO:0000318"/>
    <property type="project" value="GO_Central"/>
</dbReference>
<dbReference type="GO" id="GO:0042612">
    <property type="term" value="C:MHC class I protein complex"/>
    <property type="evidence" value="ECO:0007669"/>
    <property type="project" value="UniProtKB-KW"/>
</dbReference>
<dbReference type="GO" id="GO:0042613">
    <property type="term" value="C:MHC class II protein complex"/>
    <property type="evidence" value="ECO:0000318"/>
    <property type="project" value="GO_Central"/>
</dbReference>
<dbReference type="GO" id="GO:0023026">
    <property type="term" value="F:MHC class II protein complex binding"/>
    <property type="evidence" value="ECO:0000318"/>
    <property type="project" value="GO_Central"/>
</dbReference>
<dbReference type="GO" id="GO:0042605">
    <property type="term" value="F:peptide antigen binding"/>
    <property type="evidence" value="ECO:0000318"/>
    <property type="project" value="GO_Central"/>
</dbReference>
<dbReference type="GO" id="GO:0019886">
    <property type="term" value="P:antigen processing and presentation of exogenous peptide antigen via MHC class II"/>
    <property type="evidence" value="ECO:0000318"/>
    <property type="project" value="GO_Central"/>
</dbReference>
<dbReference type="GO" id="GO:0002474">
    <property type="term" value="P:antigen processing and presentation of peptide antigen via MHC class I"/>
    <property type="evidence" value="ECO:0007669"/>
    <property type="project" value="UniProtKB-KW"/>
</dbReference>
<dbReference type="GO" id="GO:0006955">
    <property type="term" value="P:immune response"/>
    <property type="evidence" value="ECO:0007669"/>
    <property type="project" value="InterPro"/>
</dbReference>
<dbReference type="GO" id="GO:0002503">
    <property type="term" value="P:peptide antigen assembly with MHC class II protein complex"/>
    <property type="evidence" value="ECO:0000318"/>
    <property type="project" value="GO_Central"/>
</dbReference>
<dbReference type="GO" id="GO:0050778">
    <property type="term" value="P:positive regulation of immune response"/>
    <property type="evidence" value="ECO:0000318"/>
    <property type="project" value="GO_Central"/>
</dbReference>
<dbReference type="GO" id="GO:0050870">
    <property type="term" value="P:positive regulation of T cell activation"/>
    <property type="evidence" value="ECO:0000318"/>
    <property type="project" value="GO_Central"/>
</dbReference>
<dbReference type="CDD" id="cd05770">
    <property type="entry name" value="IgC1_beta2m"/>
    <property type="match status" value="1"/>
</dbReference>
<dbReference type="FunFam" id="2.60.40.10:FF:001005">
    <property type="entry name" value="Beta-2-microglobulin"/>
    <property type="match status" value="1"/>
</dbReference>
<dbReference type="Gene3D" id="2.60.40.10">
    <property type="entry name" value="Immunoglobulins"/>
    <property type="match status" value="1"/>
</dbReference>
<dbReference type="InterPro" id="IPR015707">
    <property type="entry name" value="B2Microglobulin"/>
</dbReference>
<dbReference type="InterPro" id="IPR007110">
    <property type="entry name" value="Ig-like_dom"/>
</dbReference>
<dbReference type="InterPro" id="IPR036179">
    <property type="entry name" value="Ig-like_dom_sf"/>
</dbReference>
<dbReference type="InterPro" id="IPR013783">
    <property type="entry name" value="Ig-like_fold"/>
</dbReference>
<dbReference type="InterPro" id="IPR003006">
    <property type="entry name" value="Ig/MHC_CS"/>
</dbReference>
<dbReference type="InterPro" id="IPR003597">
    <property type="entry name" value="Ig_C1-set"/>
</dbReference>
<dbReference type="InterPro" id="IPR050160">
    <property type="entry name" value="MHC/Immunoglobulin"/>
</dbReference>
<dbReference type="PANTHER" id="PTHR19944:SF62">
    <property type="entry name" value="BETA-2-MICROGLOBULIN"/>
    <property type="match status" value="1"/>
</dbReference>
<dbReference type="PANTHER" id="PTHR19944">
    <property type="entry name" value="MHC CLASS II-RELATED"/>
    <property type="match status" value="1"/>
</dbReference>
<dbReference type="Pfam" id="PF07654">
    <property type="entry name" value="C1-set"/>
    <property type="match status" value="1"/>
</dbReference>
<dbReference type="SMART" id="SM00407">
    <property type="entry name" value="IGc1"/>
    <property type="match status" value="1"/>
</dbReference>
<dbReference type="SUPFAM" id="SSF48726">
    <property type="entry name" value="Immunoglobulin"/>
    <property type="match status" value="1"/>
</dbReference>
<dbReference type="PROSITE" id="PS50835">
    <property type="entry name" value="IG_LIKE"/>
    <property type="match status" value="1"/>
</dbReference>
<dbReference type="PROSITE" id="PS00290">
    <property type="entry name" value="IG_MHC"/>
    <property type="match status" value="1"/>
</dbReference>
<keyword id="KW-0002">3D-structure</keyword>
<keyword id="KW-0903">Direct protein sequencing</keyword>
<keyword id="KW-1015">Disulfide bond</keyword>
<keyword id="KW-0391">Immunity</keyword>
<keyword id="KW-0393">Immunoglobulin domain</keyword>
<keyword id="KW-0490">MHC I</keyword>
<keyword id="KW-1185">Reference proteome</keyword>
<keyword id="KW-0964">Secreted</keyword>
<keyword id="KW-0732">Signal</keyword>
<organism>
    <name type="scientific">Bos taurus</name>
    <name type="common">Bovine</name>
    <dbReference type="NCBI Taxonomy" id="9913"/>
    <lineage>
        <taxon>Eukaryota</taxon>
        <taxon>Metazoa</taxon>
        <taxon>Chordata</taxon>
        <taxon>Craniata</taxon>
        <taxon>Vertebrata</taxon>
        <taxon>Euteleostomi</taxon>
        <taxon>Mammalia</taxon>
        <taxon>Eutheria</taxon>
        <taxon>Laurasiatheria</taxon>
        <taxon>Artiodactyla</taxon>
        <taxon>Ruminantia</taxon>
        <taxon>Pecora</taxon>
        <taxon>Bovidae</taxon>
        <taxon>Bovinae</taxon>
        <taxon>Bos</taxon>
    </lineage>
</organism>
<proteinExistence type="evidence at protein level"/>
<protein>
    <recommendedName>
        <fullName>Beta-2-microglobulin</fullName>
    </recommendedName>
    <alternativeName>
        <fullName>Lactollin</fullName>
    </alternativeName>
</protein>
<sequence>MARFVALVLLGLLSLSGLDAIQRPPKIQVYSRHPPEDGKPNYLNCYVYGFHPPQIEIDLLKNGEKIKSEQSDLSFSKDWSFYLLSHAEFTPNSKDQYSCRVKHVTLEQPRIVKWDRDL</sequence>
<comment type="function">
    <text>Component of the class I major histocompatibility complex (MHC). Involved in the presentation of peptide antigens to the immune system.</text>
</comment>
<comment type="subunit">
    <text evidence="1 3">Heterodimer of an alpha chain and a beta chain. Beta-2-microglobulin is the beta-chain of major histocompatibility complex class I molecules (PubMed:23613577). Forms a heterotrimer with MR1 and a metabolite antigen (By similarity).</text>
</comment>
<comment type="subcellular location">
    <subcellularLocation>
        <location>Secreted</location>
    </subcellularLocation>
</comment>
<comment type="similarity">
    <text evidence="5">Belongs to the beta-2-microglobulin family.</text>
</comment>
<accession>P01888</accession>
<accession>Q148G6</accession>
<accession>Q56K05</accession>
<feature type="signal peptide" evidence="4">
    <location>
        <begin position="1"/>
        <end position="20"/>
    </location>
</feature>
<feature type="chain" id="PRO_0000018756" description="Beta-2-microglobulin">
    <location>
        <begin position="21"/>
        <end position="118"/>
    </location>
</feature>
<feature type="domain" description="Ig-like C1-type">
    <location>
        <begin position="25"/>
        <end position="112"/>
    </location>
</feature>
<feature type="disulfide bond" evidence="2 3">
    <location>
        <begin position="45"/>
        <end position="99"/>
    </location>
</feature>
<feature type="sequence conflict" description="In Ref. 4; AA sequence." evidence="5" ref="4">
    <original>D</original>
    <variation>N</variation>
    <location>
        <position position="37"/>
    </location>
</feature>
<feature type="sequence conflict" description="In Ref. 4; AA sequence." evidence="5" ref="4">
    <original>N</original>
    <variation>D</variation>
    <location>
        <position position="92"/>
    </location>
</feature>
<feature type="sequence conflict" description="In Ref. 4; AA sequence." evidence="5" ref="4">
    <original>Q</original>
    <variation>E</variation>
    <location>
        <position position="96"/>
    </location>
</feature>
<feature type="strand" evidence="7">
    <location>
        <begin position="26"/>
        <end position="33"/>
    </location>
</feature>
<feature type="strand" evidence="9">
    <location>
        <begin position="37"/>
        <end position="39"/>
    </location>
</feature>
<feature type="strand" evidence="7">
    <location>
        <begin position="41"/>
        <end position="53"/>
    </location>
</feature>
<feature type="strand" evidence="7">
    <location>
        <begin position="56"/>
        <end position="61"/>
    </location>
</feature>
<feature type="strand" evidence="9">
    <location>
        <begin position="64"/>
        <end position="66"/>
    </location>
</feature>
<feature type="strand" evidence="8">
    <location>
        <begin position="68"/>
        <end position="70"/>
    </location>
</feature>
<feature type="strand" evidence="6">
    <location>
        <begin position="74"/>
        <end position="76"/>
    </location>
</feature>
<feature type="turn" evidence="6">
    <location>
        <begin position="77"/>
        <end position="79"/>
    </location>
</feature>
<feature type="strand" evidence="7">
    <location>
        <begin position="81"/>
        <end position="89"/>
    </location>
</feature>
<feature type="strand" evidence="7">
    <location>
        <begin position="97"/>
        <end position="102"/>
    </location>
</feature>
<feature type="strand" evidence="10">
    <location>
        <begin position="106"/>
        <end position="108"/>
    </location>
</feature>
<feature type="strand" evidence="7">
    <location>
        <begin position="110"/>
        <end position="113"/>
    </location>
</feature>
<gene>
    <name type="primary">B2M</name>
</gene>
<name>B2MG_BOVIN</name>
<reference key="1">
    <citation type="journal article" date="1993" name="Immunogenetics">
        <title>Nucleotide sequence of cattle beta 2-microglobulin cDNA.</title>
        <authorList>
            <person name="Ellis S.A."/>
            <person name="Braem K.A."/>
            <person name="Payne L."/>
        </authorList>
    </citation>
    <scope>NUCLEOTIDE SEQUENCE [MRNA]</scope>
</reference>
<reference key="2">
    <citation type="submission" date="2005-01" db="EMBL/GenBank/DDBJ databases">
        <title>Analysis of sequences obtained from constructed full-length bovine cDNA libraries.</title>
        <authorList>
            <person name="Yu J."/>
            <person name="Meng Y."/>
            <person name="Wang Z."/>
            <person name="Hansen C."/>
            <person name="Li C."/>
            <person name="Moore S.S."/>
        </authorList>
    </citation>
    <scope>NUCLEOTIDE SEQUENCE [LARGE SCALE MRNA]</scope>
    <source>
        <tissue>Lymphoid epithelium</tissue>
    </source>
</reference>
<reference key="3">
    <citation type="submission" date="2006-06" db="EMBL/GenBank/DDBJ databases">
        <authorList>
            <consortium name="NIH - Mammalian Gene Collection (MGC) project"/>
        </authorList>
    </citation>
    <scope>NUCLEOTIDE SEQUENCE [LARGE SCALE MRNA]</scope>
    <source>
        <strain>Hereford</strain>
        <tissue>Fetal cerebellum</tissue>
    </source>
</reference>
<reference key="4">
    <citation type="journal article" date="1982" name="J. Biol. Chem.">
        <title>Complete amino acid sequence of bovine beta 2-microglobulin.</title>
        <authorList>
            <person name="Groves M.L."/>
            <person name="Greenberg R."/>
        </authorList>
    </citation>
    <scope>PROTEIN SEQUENCE OF 21-118</scope>
</reference>
<reference key="5">
    <citation type="journal article" date="1985" name="Proc. Natl. Acad. Sci. U.S.A.">
        <title>Three-dimensional structure of beta 2-microglobulin.</title>
        <authorList>
            <person name="Becker J.W."/>
            <person name="Reeke G.N. Jr."/>
        </authorList>
    </citation>
    <scope>X-RAY CRYSTALLOGRAPHY (2.9 ANGSTROMS)</scope>
</reference>
<reference key="6">
    <citation type="journal article" date="2013" name="Proc. Natl. Acad. Sci. U.S.A.">
        <title>The molecular basis for Mucosal-Associated Invariant T cell recognition of MR1 proteins.</title>
        <authorList>
            <person name="Lopez-Sagaseta J."/>
            <person name="Dulberger C.L."/>
            <person name="Crooks J.E."/>
            <person name="Parks C.D."/>
            <person name="Luoma A.M."/>
            <person name="McFedries A."/>
            <person name="Van Rhijn I."/>
            <person name="Saghatelian A."/>
            <person name="Adams E.J."/>
        </authorList>
    </citation>
    <scope>X-RAY CRYSTALLOGRAPHY (2.86 ANGSTROMS) OF 21-118 IN COMPLEX WITH MR1</scope>
    <scope>DISULFIDE BOND</scope>
</reference>
<evidence type="ECO:0000250" key="1">
    <source>
        <dbReference type="UniProtKB" id="P61769"/>
    </source>
</evidence>
<evidence type="ECO:0000255" key="2">
    <source>
        <dbReference type="PROSITE-ProRule" id="PRU00114"/>
    </source>
</evidence>
<evidence type="ECO:0000269" key="3">
    <source>
    </source>
</evidence>
<evidence type="ECO:0000269" key="4">
    <source>
    </source>
</evidence>
<evidence type="ECO:0000305" key="5"/>
<evidence type="ECO:0007829" key="6">
    <source>
        <dbReference type="PDB" id="1BMG"/>
    </source>
</evidence>
<evidence type="ECO:0007829" key="7">
    <source>
        <dbReference type="PDB" id="2XFX"/>
    </source>
</evidence>
<evidence type="ECO:0007829" key="8">
    <source>
        <dbReference type="PDB" id="4F7C"/>
    </source>
</evidence>
<evidence type="ECO:0007829" key="9">
    <source>
        <dbReference type="PDB" id="4IIQ"/>
    </source>
</evidence>
<evidence type="ECO:0007829" key="10">
    <source>
        <dbReference type="PDB" id="7RNO"/>
    </source>
</evidence>